<name>FPG_ECO7I</name>
<comment type="function">
    <text evidence="2">Involved in base excision repair of DNA damaged by oxidation or by mutagenic agents. Acts as a DNA glycosylase that recognizes and removes damaged bases. Has a preference for oxidized purines, such as 7,8-dihydro-8-oxoguanine (8-oxoG). Has AP (apurinic/apyrimidinic) lyase activity and introduces nicks in the DNA strand. Cleaves the DNA backbone by beta-delta elimination to generate a single-strand break at the site of the removed base with both 3'- and 5'-phosphates.</text>
</comment>
<comment type="catalytic activity">
    <reaction evidence="2">
        <text>Hydrolysis of DNA containing ring-opened 7-methylguanine residues, releasing 2,6-diamino-4-hydroxy-5-(N-methyl)formamidopyrimidine.</text>
        <dbReference type="EC" id="3.2.2.23"/>
    </reaction>
</comment>
<comment type="catalytic activity">
    <reaction evidence="2">
        <text>2'-deoxyribonucleotide-(2'-deoxyribose 5'-phosphate)-2'-deoxyribonucleotide-DNA = a 3'-end 2'-deoxyribonucleotide-(2,3-dehydro-2,3-deoxyribose 5'-phosphate)-DNA + a 5'-end 5'-phospho-2'-deoxyribonucleoside-DNA + H(+)</text>
        <dbReference type="Rhea" id="RHEA:66592"/>
        <dbReference type="Rhea" id="RHEA-COMP:13180"/>
        <dbReference type="Rhea" id="RHEA-COMP:16897"/>
        <dbReference type="Rhea" id="RHEA-COMP:17067"/>
        <dbReference type="ChEBI" id="CHEBI:15378"/>
        <dbReference type="ChEBI" id="CHEBI:136412"/>
        <dbReference type="ChEBI" id="CHEBI:157695"/>
        <dbReference type="ChEBI" id="CHEBI:167181"/>
        <dbReference type="EC" id="4.2.99.18"/>
    </reaction>
</comment>
<comment type="cofactor">
    <cofactor evidence="2">
        <name>Zn(2+)</name>
        <dbReference type="ChEBI" id="CHEBI:29105"/>
    </cofactor>
    <text evidence="2">Binds 1 zinc ion per subunit.</text>
</comment>
<comment type="subunit">
    <text evidence="2">Monomer.</text>
</comment>
<comment type="similarity">
    <text evidence="2">Belongs to the FPG family.</text>
</comment>
<keyword id="KW-0227">DNA damage</keyword>
<keyword id="KW-0234">DNA repair</keyword>
<keyword id="KW-0238">DNA-binding</keyword>
<keyword id="KW-0326">Glycosidase</keyword>
<keyword id="KW-0378">Hydrolase</keyword>
<keyword id="KW-0456">Lyase</keyword>
<keyword id="KW-0479">Metal-binding</keyword>
<keyword id="KW-0511">Multifunctional enzyme</keyword>
<keyword id="KW-0862">Zinc</keyword>
<keyword id="KW-0863">Zinc-finger</keyword>
<proteinExistence type="inferred from homology"/>
<feature type="initiator methionine" description="Removed" evidence="1">
    <location>
        <position position="1"/>
    </location>
</feature>
<feature type="chain" id="PRO_1000117381" description="Formamidopyrimidine-DNA glycosylase">
    <location>
        <begin position="2"/>
        <end position="269"/>
    </location>
</feature>
<feature type="zinc finger region" description="FPG-type" evidence="2">
    <location>
        <begin position="235"/>
        <end position="269"/>
    </location>
</feature>
<feature type="active site" description="Schiff-base intermediate with DNA" evidence="2">
    <location>
        <position position="2"/>
    </location>
</feature>
<feature type="active site" description="Proton donor" evidence="2">
    <location>
        <position position="3"/>
    </location>
</feature>
<feature type="active site" description="Proton donor; for beta-elimination activity" evidence="2">
    <location>
        <position position="57"/>
    </location>
</feature>
<feature type="active site" description="Proton donor; for delta-elimination activity" evidence="2">
    <location>
        <position position="259"/>
    </location>
</feature>
<feature type="binding site" evidence="2">
    <location>
        <position position="90"/>
    </location>
    <ligand>
        <name>DNA</name>
        <dbReference type="ChEBI" id="CHEBI:16991"/>
    </ligand>
</feature>
<feature type="binding site" evidence="2">
    <location>
        <position position="109"/>
    </location>
    <ligand>
        <name>DNA</name>
        <dbReference type="ChEBI" id="CHEBI:16991"/>
    </ligand>
</feature>
<feature type="binding site" evidence="2">
    <location>
        <position position="150"/>
    </location>
    <ligand>
        <name>DNA</name>
        <dbReference type="ChEBI" id="CHEBI:16991"/>
    </ligand>
</feature>
<reference key="1">
    <citation type="journal article" date="2009" name="PLoS Genet.">
        <title>Organised genome dynamics in the Escherichia coli species results in highly diverse adaptive paths.</title>
        <authorList>
            <person name="Touchon M."/>
            <person name="Hoede C."/>
            <person name="Tenaillon O."/>
            <person name="Barbe V."/>
            <person name="Baeriswyl S."/>
            <person name="Bidet P."/>
            <person name="Bingen E."/>
            <person name="Bonacorsi S."/>
            <person name="Bouchier C."/>
            <person name="Bouvet O."/>
            <person name="Calteau A."/>
            <person name="Chiapello H."/>
            <person name="Clermont O."/>
            <person name="Cruveiller S."/>
            <person name="Danchin A."/>
            <person name="Diard M."/>
            <person name="Dossat C."/>
            <person name="Karoui M.E."/>
            <person name="Frapy E."/>
            <person name="Garry L."/>
            <person name="Ghigo J.M."/>
            <person name="Gilles A.M."/>
            <person name="Johnson J."/>
            <person name="Le Bouguenec C."/>
            <person name="Lescat M."/>
            <person name="Mangenot S."/>
            <person name="Martinez-Jehanne V."/>
            <person name="Matic I."/>
            <person name="Nassif X."/>
            <person name="Oztas S."/>
            <person name="Petit M.A."/>
            <person name="Pichon C."/>
            <person name="Rouy Z."/>
            <person name="Ruf C.S."/>
            <person name="Schneider D."/>
            <person name="Tourret J."/>
            <person name="Vacherie B."/>
            <person name="Vallenet D."/>
            <person name="Medigue C."/>
            <person name="Rocha E.P.C."/>
            <person name="Denamur E."/>
        </authorList>
    </citation>
    <scope>NUCLEOTIDE SEQUENCE [LARGE SCALE GENOMIC DNA]</scope>
    <source>
        <strain>IAI39 / ExPEC</strain>
    </source>
</reference>
<dbReference type="EC" id="3.2.2.23" evidence="2"/>
<dbReference type="EC" id="4.2.99.18" evidence="2"/>
<dbReference type="EMBL" id="CU928164">
    <property type="protein sequence ID" value="CAR20261.1"/>
    <property type="molecule type" value="Genomic_DNA"/>
</dbReference>
<dbReference type="RefSeq" id="WP_001114556.1">
    <property type="nucleotide sequence ID" value="NC_011750.1"/>
</dbReference>
<dbReference type="RefSeq" id="YP_002410030.1">
    <property type="nucleotide sequence ID" value="NC_011750.1"/>
</dbReference>
<dbReference type="SMR" id="B7NPE1"/>
<dbReference type="STRING" id="585057.ECIAI39_4153"/>
<dbReference type="KEGG" id="ect:ECIAI39_4153"/>
<dbReference type="PATRIC" id="fig|585057.6.peg.4304"/>
<dbReference type="HOGENOM" id="CLU_038423_1_1_6"/>
<dbReference type="Proteomes" id="UP000000749">
    <property type="component" value="Chromosome"/>
</dbReference>
<dbReference type="GO" id="GO:0034039">
    <property type="term" value="F:8-oxo-7,8-dihydroguanine DNA N-glycosylase activity"/>
    <property type="evidence" value="ECO:0007669"/>
    <property type="project" value="TreeGrafter"/>
</dbReference>
<dbReference type="GO" id="GO:0140078">
    <property type="term" value="F:class I DNA-(apurinic or apyrimidinic site) endonuclease activity"/>
    <property type="evidence" value="ECO:0007669"/>
    <property type="project" value="UniProtKB-EC"/>
</dbReference>
<dbReference type="GO" id="GO:0003684">
    <property type="term" value="F:damaged DNA binding"/>
    <property type="evidence" value="ECO:0007669"/>
    <property type="project" value="InterPro"/>
</dbReference>
<dbReference type="GO" id="GO:0008270">
    <property type="term" value="F:zinc ion binding"/>
    <property type="evidence" value="ECO:0007669"/>
    <property type="project" value="UniProtKB-UniRule"/>
</dbReference>
<dbReference type="GO" id="GO:0006284">
    <property type="term" value="P:base-excision repair"/>
    <property type="evidence" value="ECO:0007669"/>
    <property type="project" value="InterPro"/>
</dbReference>
<dbReference type="CDD" id="cd08966">
    <property type="entry name" value="EcFpg-like_N"/>
    <property type="match status" value="1"/>
</dbReference>
<dbReference type="FunFam" id="1.10.8.50:FF:000003">
    <property type="entry name" value="Formamidopyrimidine-DNA glycosylase"/>
    <property type="match status" value="1"/>
</dbReference>
<dbReference type="FunFam" id="3.20.190.10:FF:000001">
    <property type="entry name" value="Formamidopyrimidine-DNA glycosylase"/>
    <property type="match status" value="1"/>
</dbReference>
<dbReference type="Gene3D" id="1.10.8.50">
    <property type="match status" value="1"/>
</dbReference>
<dbReference type="Gene3D" id="3.20.190.10">
    <property type="entry name" value="MutM-like, N-terminal"/>
    <property type="match status" value="1"/>
</dbReference>
<dbReference type="HAMAP" id="MF_00103">
    <property type="entry name" value="Fapy_DNA_glycosyl"/>
    <property type="match status" value="1"/>
</dbReference>
<dbReference type="InterPro" id="IPR015886">
    <property type="entry name" value="DNA_glyclase/AP_lyase_DNA-bd"/>
</dbReference>
<dbReference type="InterPro" id="IPR015887">
    <property type="entry name" value="DNA_glyclase_Znf_dom_DNA_BS"/>
</dbReference>
<dbReference type="InterPro" id="IPR020629">
    <property type="entry name" value="Formamido-pyr_DNA_Glyclase"/>
</dbReference>
<dbReference type="InterPro" id="IPR012319">
    <property type="entry name" value="FPG_cat"/>
</dbReference>
<dbReference type="InterPro" id="IPR035937">
    <property type="entry name" value="MutM-like_N-ter"/>
</dbReference>
<dbReference type="InterPro" id="IPR010979">
    <property type="entry name" value="Ribosomal_uS13-like_H2TH"/>
</dbReference>
<dbReference type="InterPro" id="IPR000214">
    <property type="entry name" value="Znf_DNA_glyclase/AP_lyase"/>
</dbReference>
<dbReference type="InterPro" id="IPR010663">
    <property type="entry name" value="Znf_FPG/IleRS"/>
</dbReference>
<dbReference type="NCBIfam" id="TIGR00577">
    <property type="entry name" value="fpg"/>
    <property type="match status" value="1"/>
</dbReference>
<dbReference type="NCBIfam" id="NF002211">
    <property type="entry name" value="PRK01103.1"/>
    <property type="match status" value="1"/>
</dbReference>
<dbReference type="PANTHER" id="PTHR22993">
    <property type="entry name" value="FORMAMIDOPYRIMIDINE-DNA GLYCOSYLASE"/>
    <property type="match status" value="1"/>
</dbReference>
<dbReference type="PANTHER" id="PTHR22993:SF9">
    <property type="entry name" value="FORMAMIDOPYRIMIDINE-DNA GLYCOSYLASE"/>
    <property type="match status" value="1"/>
</dbReference>
<dbReference type="Pfam" id="PF01149">
    <property type="entry name" value="Fapy_DNA_glyco"/>
    <property type="match status" value="1"/>
</dbReference>
<dbReference type="Pfam" id="PF06831">
    <property type="entry name" value="H2TH"/>
    <property type="match status" value="1"/>
</dbReference>
<dbReference type="Pfam" id="PF06827">
    <property type="entry name" value="zf-FPG_IleRS"/>
    <property type="match status" value="1"/>
</dbReference>
<dbReference type="SMART" id="SM00898">
    <property type="entry name" value="Fapy_DNA_glyco"/>
    <property type="match status" value="1"/>
</dbReference>
<dbReference type="SMART" id="SM01232">
    <property type="entry name" value="H2TH"/>
    <property type="match status" value="1"/>
</dbReference>
<dbReference type="SUPFAM" id="SSF57716">
    <property type="entry name" value="Glucocorticoid receptor-like (DNA-binding domain)"/>
    <property type="match status" value="1"/>
</dbReference>
<dbReference type="SUPFAM" id="SSF81624">
    <property type="entry name" value="N-terminal domain of MutM-like DNA repair proteins"/>
    <property type="match status" value="1"/>
</dbReference>
<dbReference type="SUPFAM" id="SSF46946">
    <property type="entry name" value="S13-like H2TH domain"/>
    <property type="match status" value="1"/>
</dbReference>
<dbReference type="PROSITE" id="PS51068">
    <property type="entry name" value="FPG_CAT"/>
    <property type="match status" value="1"/>
</dbReference>
<dbReference type="PROSITE" id="PS01242">
    <property type="entry name" value="ZF_FPG_1"/>
    <property type="match status" value="1"/>
</dbReference>
<dbReference type="PROSITE" id="PS51066">
    <property type="entry name" value="ZF_FPG_2"/>
    <property type="match status" value="1"/>
</dbReference>
<sequence>MPELPEVETSRRGIEPYLVGATILHAVVRNGRLRWPVSEEIYRLSDQPVLSVQRRAKYLLLELPEGWIIIHLGMSGSLRILPEELPPEKHDHVDLVMSNGKVLRYTDPRRFGAWLWTKELEGHNVLAHLGPEPLSDDFNGEYLHQKCAKKKTAIKPWLMDNKLVVGVGNIYASESLFAAGIHPDRLASSLSLAECELLARVIKAVLLRSIEQGGTTLKDFLQSDGKPGYFAQELQVYGRKGEPCRVCGTPIVATKHAQRATFYCRQCQK</sequence>
<evidence type="ECO:0000250" key="1"/>
<evidence type="ECO:0000255" key="2">
    <source>
        <dbReference type="HAMAP-Rule" id="MF_00103"/>
    </source>
</evidence>
<accession>B7NPE1</accession>
<gene>
    <name evidence="2" type="primary">mutM</name>
    <name evidence="2" type="synonym">fpg</name>
    <name type="ordered locus">ECIAI39_4153</name>
</gene>
<organism>
    <name type="scientific">Escherichia coli O7:K1 (strain IAI39 / ExPEC)</name>
    <dbReference type="NCBI Taxonomy" id="585057"/>
    <lineage>
        <taxon>Bacteria</taxon>
        <taxon>Pseudomonadati</taxon>
        <taxon>Pseudomonadota</taxon>
        <taxon>Gammaproteobacteria</taxon>
        <taxon>Enterobacterales</taxon>
        <taxon>Enterobacteriaceae</taxon>
        <taxon>Escherichia</taxon>
    </lineage>
</organism>
<protein>
    <recommendedName>
        <fullName evidence="2">Formamidopyrimidine-DNA glycosylase</fullName>
        <shortName evidence="2">Fapy-DNA glycosylase</shortName>
        <ecNumber evidence="2">3.2.2.23</ecNumber>
    </recommendedName>
    <alternativeName>
        <fullName evidence="2">DNA-(apurinic or apyrimidinic site) lyase MutM</fullName>
        <shortName evidence="2">AP lyase MutM</shortName>
        <ecNumber evidence="2">4.2.99.18</ecNumber>
    </alternativeName>
</protein>